<gene>
    <name evidence="6" type="primary">NHL12</name>
    <name evidence="7" type="ordered locus">At2g35960</name>
    <name evidence="8" type="ORF">F11F19.13</name>
</gene>
<keyword id="KW-1003">Cell membrane</keyword>
<keyword id="KW-0325">Glycoprotein</keyword>
<keyword id="KW-0472">Membrane</keyword>
<keyword id="KW-0611">Plant defense</keyword>
<keyword id="KW-1185">Reference proteome</keyword>
<keyword id="KW-0812">Transmembrane</keyword>
<keyword id="KW-1133">Transmembrane helix</keyword>
<accession>Q9SJ54</accession>
<feature type="chain" id="PRO_0000436252" description="NDR1/HIN1-like protein 12">
    <location>
        <begin position="1"/>
        <end position="210"/>
    </location>
</feature>
<feature type="transmembrane region" description="Helical" evidence="3">
    <location>
        <begin position="23"/>
        <end position="43"/>
    </location>
</feature>
<feature type="glycosylation site" description="N-linked (GlcNAc...) asparagine" evidence="4">
    <location>
        <position position="61"/>
    </location>
</feature>
<comment type="function">
    <text evidence="2">May play a role in plant immunity.</text>
</comment>
<comment type="subunit">
    <text evidence="1">May form oligomers or be a component of larger protein complex in plasma membranes.</text>
</comment>
<comment type="subcellular location">
    <subcellularLocation>
        <location evidence="1">Cell membrane</location>
        <topology evidence="3">Single-pass membrane protein</topology>
    </subcellularLocation>
</comment>
<comment type="tissue specificity">
    <text evidence="5">Expressed in leaves, stems and flowers, and, to a lower extent, in siliques and roots.</text>
</comment>
<comment type="induction">
    <text evidence="5">Slightly up-regulated by spermine (Spm).</text>
</comment>
<proteinExistence type="evidence at transcript level"/>
<organism>
    <name type="scientific">Arabidopsis thaliana</name>
    <name type="common">Mouse-ear cress</name>
    <dbReference type="NCBI Taxonomy" id="3702"/>
    <lineage>
        <taxon>Eukaryota</taxon>
        <taxon>Viridiplantae</taxon>
        <taxon>Streptophyta</taxon>
        <taxon>Embryophyta</taxon>
        <taxon>Tracheophyta</taxon>
        <taxon>Spermatophyta</taxon>
        <taxon>Magnoliopsida</taxon>
        <taxon>eudicotyledons</taxon>
        <taxon>Gunneridae</taxon>
        <taxon>Pentapetalae</taxon>
        <taxon>rosids</taxon>
        <taxon>malvids</taxon>
        <taxon>Brassicales</taxon>
        <taxon>Brassicaceae</taxon>
        <taxon>Camelineae</taxon>
        <taxon>Arabidopsis</taxon>
    </lineage>
</organism>
<dbReference type="EMBL" id="AC007017">
    <property type="protein sequence ID" value="AAD21461.1"/>
    <property type="molecule type" value="Genomic_DNA"/>
</dbReference>
<dbReference type="EMBL" id="CP002685">
    <property type="protein sequence ID" value="AEC09183.1"/>
    <property type="molecule type" value="Genomic_DNA"/>
</dbReference>
<dbReference type="EMBL" id="AK175879">
    <property type="protein sequence ID" value="BAD43642.1"/>
    <property type="molecule type" value="mRNA"/>
</dbReference>
<dbReference type="EMBL" id="BT025781">
    <property type="protein sequence ID" value="ABF83671.1"/>
    <property type="molecule type" value="mRNA"/>
</dbReference>
<dbReference type="EMBL" id="AY085897">
    <property type="protein sequence ID" value="AAM63109.1"/>
    <property type="molecule type" value="mRNA"/>
</dbReference>
<dbReference type="PIR" id="B84775">
    <property type="entry name" value="B84775"/>
</dbReference>
<dbReference type="RefSeq" id="NP_181140.1">
    <property type="nucleotide sequence ID" value="NM_129155.5"/>
</dbReference>
<dbReference type="FunCoup" id="Q9SJ54">
    <property type="interactions" value="10"/>
</dbReference>
<dbReference type="STRING" id="3702.Q9SJ54"/>
<dbReference type="GlyCosmos" id="Q9SJ54">
    <property type="glycosylation" value="1 site, No reported glycans"/>
</dbReference>
<dbReference type="GlyGen" id="Q9SJ54">
    <property type="glycosylation" value="1 site"/>
</dbReference>
<dbReference type="PaxDb" id="3702-AT2G35960.1"/>
<dbReference type="ProteomicsDB" id="250560"/>
<dbReference type="EnsemblPlants" id="AT2G35960.1">
    <property type="protein sequence ID" value="AT2G35960.1"/>
    <property type="gene ID" value="AT2G35960"/>
</dbReference>
<dbReference type="GeneID" id="818169"/>
<dbReference type="Gramene" id="AT2G35960.1">
    <property type="protein sequence ID" value="AT2G35960.1"/>
    <property type="gene ID" value="AT2G35960"/>
</dbReference>
<dbReference type="KEGG" id="ath:AT2G35960"/>
<dbReference type="Araport" id="AT2G35960"/>
<dbReference type="TAIR" id="AT2G35960">
    <property type="gene designation" value="NHL12"/>
</dbReference>
<dbReference type="eggNOG" id="ENOG502QSD7">
    <property type="taxonomic scope" value="Eukaryota"/>
</dbReference>
<dbReference type="HOGENOM" id="CLU_051752_1_1_1"/>
<dbReference type="InParanoid" id="Q9SJ54"/>
<dbReference type="OMA" id="HCPANIR"/>
<dbReference type="OrthoDB" id="1426517at2759"/>
<dbReference type="PhylomeDB" id="Q9SJ54"/>
<dbReference type="PRO" id="PR:Q9SJ54"/>
<dbReference type="Proteomes" id="UP000006548">
    <property type="component" value="Chromosome 2"/>
</dbReference>
<dbReference type="ExpressionAtlas" id="Q9SJ54">
    <property type="expression patterns" value="baseline and differential"/>
</dbReference>
<dbReference type="GO" id="GO:0005886">
    <property type="term" value="C:plasma membrane"/>
    <property type="evidence" value="ECO:0007669"/>
    <property type="project" value="UniProtKB-SubCell"/>
</dbReference>
<dbReference type="GO" id="GO:0098542">
    <property type="term" value="P:defense response to other organism"/>
    <property type="evidence" value="ECO:0007669"/>
    <property type="project" value="InterPro"/>
</dbReference>
<dbReference type="InterPro" id="IPR004864">
    <property type="entry name" value="LEA_2"/>
</dbReference>
<dbReference type="InterPro" id="IPR044839">
    <property type="entry name" value="NDR1-like"/>
</dbReference>
<dbReference type="PANTHER" id="PTHR31415:SF74">
    <property type="entry name" value="LATE EMBRYOGENESIS ABUNDANT (LEA) HYDROXYPROLINE-RICH GLYCOPROTEIN FAMILY-RELATED"/>
    <property type="match status" value="1"/>
</dbReference>
<dbReference type="PANTHER" id="PTHR31415">
    <property type="entry name" value="OS05G0367900 PROTEIN"/>
    <property type="match status" value="1"/>
</dbReference>
<dbReference type="Pfam" id="PF03168">
    <property type="entry name" value="LEA_2"/>
    <property type="match status" value="1"/>
</dbReference>
<evidence type="ECO:0000250" key="1">
    <source>
        <dbReference type="UniProtKB" id="Q9FNH6"/>
    </source>
</evidence>
<evidence type="ECO:0000250" key="2">
    <source>
        <dbReference type="UniProtKB" id="Q9ZVD2"/>
    </source>
</evidence>
<evidence type="ECO:0000255" key="3"/>
<evidence type="ECO:0000255" key="4">
    <source>
        <dbReference type="PROSITE-ProRule" id="PRU00498"/>
    </source>
</evidence>
<evidence type="ECO:0000269" key="5">
    <source>
    </source>
</evidence>
<evidence type="ECO:0000303" key="6">
    <source>
    </source>
</evidence>
<evidence type="ECO:0000312" key="7">
    <source>
        <dbReference type="Araport" id="AT2G35960"/>
    </source>
</evidence>
<evidence type="ECO:0000312" key="8">
    <source>
        <dbReference type="EMBL" id="AAD21461.1"/>
    </source>
</evidence>
<reference key="1">
    <citation type="journal article" date="1999" name="Nature">
        <title>Sequence and analysis of chromosome 2 of the plant Arabidopsis thaliana.</title>
        <authorList>
            <person name="Lin X."/>
            <person name="Kaul S."/>
            <person name="Rounsley S.D."/>
            <person name="Shea T.P."/>
            <person name="Benito M.-I."/>
            <person name="Town C.D."/>
            <person name="Fujii C.Y."/>
            <person name="Mason T.M."/>
            <person name="Bowman C.L."/>
            <person name="Barnstead M.E."/>
            <person name="Feldblyum T.V."/>
            <person name="Buell C.R."/>
            <person name="Ketchum K.A."/>
            <person name="Lee J.J."/>
            <person name="Ronning C.M."/>
            <person name="Koo H.L."/>
            <person name="Moffat K.S."/>
            <person name="Cronin L.A."/>
            <person name="Shen M."/>
            <person name="Pai G."/>
            <person name="Van Aken S."/>
            <person name="Umayam L."/>
            <person name="Tallon L.J."/>
            <person name="Gill J.E."/>
            <person name="Adams M.D."/>
            <person name="Carrera A.J."/>
            <person name="Creasy T.H."/>
            <person name="Goodman H.M."/>
            <person name="Somerville C.R."/>
            <person name="Copenhaver G.P."/>
            <person name="Preuss D."/>
            <person name="Nierman W.C."/>
            <person name="White O."/>
            <person name="Eisen J.A."/>
            <person name="Salzberg S.L."/>
            <person name="Fraser C.M."/>
            <person name="Venter J.C."/>
        </authorList>
    </citation>
    <scope>NUCLEOTIDE SEQUENCE [LARGE SCALE GENOMIC DNA]</scope>
    <source>
        <strain>cv. Columbia</strain>
    </source>
</reference>
<reference key="2">
    <citation type="journal article" date="2017" name="Plant J.">
        <title>Araport11: a complete reannotation of the Arabidopsis thaliana reference genome.</title>
        <authorList>
            <person name="Cheng C.Y."/>
            <person name="Krishnakumar V."/>
            <person name="Chan A.P."/>
            <person name="Thibaud-Nissen F."/>
            <person name="Schobel S."/>
            <person name="Town C.D."/>
        </authorList>
    </citation>
    <scope>GENOME REANNOTATION</scope>
    <source>
        <strain>cv. Columbia</strain>
    </source>
</reference>
<reference key="3">
    <citation type="submission" date="2004-09" db="EMBL/GenBank/DDBJ databases">
        <title>Large-scale analysis of RIKEN Arabidopsis full-length (RAFL) cDNAs.</title>
        <authorList>
            <person name="Totoki Y."/>
            <person name="Seki M."/>
            <person name="Ishida J."/>
            <person name="Nakajima M."/>
            <person name="Enju A."/>
            <person name="Kamiya A."/>
            <person name="Narusaka M."/>
            <person name="Shin-i T."/>
            <person name="Nakagawa M."/>
            <person name="Sakamoto N."/>
            <person name="Oishi K."/>
            <person name="Kohara Y."/>
            <person name="Kobayashi M."/>
            <person name="Toyoda A."/>
            <person name="Sakaki Y."/>
            <person name="Sakurai T."/>
            <person name="Iida K."/>
            <person name="Akiyama K."/>
            <person name="Satou M."/>
            <person name="Toyoda T."/>
            <person name="Konagaya A."/>
            <person name="Carninci P."/>
            <person name="Kawai J."/>
            <person name="Hayashizaki Y."/>
            <person name="Shinozaki K."/>
        </authorList>
    </citation>
    <scope>NUCLEOTIDE SEQUENCE [LARGE SCALE MRNA]</scope>
    <source>
        <strain>cv. Columbia</strain>
    </source>
</reference>
<reference key="4">
    <citation type="submission" date="2006-06" db="EMBL/GenBank/DDBJ databases">
        <title>Arabidopsis ORF clones.</title>
        <authorList>
            <person name="Kim C.J."/>
            <person name="Chen H."/>
            <person name="Quinitio C."/>
            <person name="Shinn P."/>
            <person name="Ecker J.R."/>
        </authorList>
    </citation>
    <scope>NUCLEOTIDE SEQUENCE [LARGE SCALE MRNA]</scope>
    <source>
        <strain>cv. Columbia</strain>
    </source>
</reference>
<reference key="5">
    <citation type="submission" date="2002-03" db="EMBL/GenBank/DDBJ databases">
        <title>Full-length cDNA from Arabidopsis thaliana.</title>
        <authorList>
            <person name="Brover V.V."/>
            <person name="Troukhan M.E."/>
            <person name="Alexandrov N.A."/>
            <person name="Lu Y.-P."/>
            <person name="Flavell R.B."/>
            <person name="Feldmann K.A."/>
        </authorList>
    </citation>
    <scope>NUCLEOTIDE SEQUENCE [LARGE SCALE MRNA]</scope>
</reference>
<reference key="6">
    <citation type="journal article" date="2004" name="Planta">
        <title>Up-regulation of Arabidopsis thaliana NHL10 in the hypersensitive response to Cucumber mosaic virus infection and in senescing leaves is controlled by signalling pathways that differ in salicylate involvement.</title>
        <authorList>
            <person name="Zheng M.S."/>
            <person name="Takahashi H."/>
            <person name="Miyazaki A."/>
            <person name="Hamamoto H."/>
            <person name="Shah J."/>
            <person name="Yamaguchi I."/>
            <person name="Kusano T."/>
        </authorList>
    </citation>
    <scope>INDUCTION BY SPERMINE</scope>
    <scope>TISSUE SPECIFICITY</scope>
    <scope>GENE FAMILY</scope>
    <scope>NOMENCLATURE</scope>
</reference>
<sequence>MTTKDCGNHGGGGGGGTASRICGVIIGFIIIVLITIFLVWIILQPTKPRFILQDATVYAFNLSQPNLLTSNFQITIASRNRNSRIGIYYDRLHVYATYRNQQITLRTAIPPTYQGHKEDNVWSPFVYGNSVPIAPFNAVALGDEQNRGFVTLIIRADGRVRWKVGTLITGKYHLHVRCQAFINLADKAAGVHVGENAVKYMLINKCSVNV</sequence>
<protein>
    <recommendedName>
        <fullName evidence="6">NDR1/HIN1-like protein 12</fullName>
    </recommendedName>
</protein>
<name>NHL12_ARATH</name>